<evidence type="ECO:0000255" key="1">
    <source>
        <dbReference type="HAMAP-Rule" id="MF_01227"/>
    </source>
</evidence>
<proteinExistence type="inferred from homology"/>
<keyword id="KW-0067">ATP-binding</keyword>
<keyword id="KW-0315">Glutamine amidotransferase</keyword>
<keyword id="KW-0436">Ligase</keyword>
<keyword id="KW-0460">Magnesium</keyword>
<keyword id="KW-0479">Metal-binding</keyword>
<keyword id="KW-0547">Nucleotide-binding</keyword>
<keyword id="KW-0665">Pyrimidine biosynthesis</keyword>
<keyword id="KW-1185">Reference proteome</keyword>
<reference key="1">
    <citation type="journal article" date="2005" name="Infect. Immun.">
        <title>Whole-genome analyses of speciation events in pathogenic Brucellae.</title>
        <authorList>
            <person name="Chain P.S."/>
            <person name="Comerci D.J."/>
            <person name="Tolmasky M.E."/>
            <person name="Larimer F.W."/>
            <person name="Malfatti S.A."/>
            <person name="Vergez L.M."/>
            <person name="Aguero F."/>
            <person name="Land M.L."/>
            <person name="Ugalde R.A."/>
            <person name="Garcia E."/>
        </authorList>
    </citation>
    <scope>NUCLEOTIDE SEQUENCE [LARGE SCALE GENOMIC DNA]</scope>
    <source>
        <strain>2308</strain>
    </source>
</reference>
<gene>
    <name evidence="1" type="primary">pyrG</name>
    <name type="ordered locus">BAB1_1157</name>
</gene>
<name>PYRG_BRUA2</name>
<dbReference type="EC" id="6.3.4.2" evidence="1"/>
<dbReference type="EMBL" id="AM040264">
    <property type="protein sequence ID" value="CAJ11113.1"/>
    <property type="molecule type" value="Genomic_DNA"/>
</dbReference>
<dbReference type="RefSeq" id="WP_002964263.1">
    <property type="nucleotide sequence ID" value="NZ_KN046823.1"/>
</dbReference>
<dbReference type="SMR" id="Q2YPU8"/>
<dbReference type="STRING" id="359391.BAB1_1157"/>
<dbReference type="MEROPS" id="C26.964"/>
<dbReference type="KEGG" id="bmf:BAB1_1157"/>
<dbReference type="PATRIC" id="fig|359391.11.peg.56"/>
<dbReference type="HOGENOM" id="CLU_011675_5_0_5"/>
<dbReference type="PhylomeDB" id="Q2YPU8"/>
<dbReference type="UniPathway" id="UPA00159">
    <property type="reaction ID" value="UER00277"/>
</dbReference>
<dbReference type="Proteomes" id="UP000002719">
    <property type="component" value="Chromosome I"/>
</dbReference>
<dbReference type="GO" id="GO:0005829">
    <property type="term" value="C:cytosol"/>
    <property type="evidence" value="ECO:0007669"/>
    <property type="project" value="TreeGrafter"/>
</dbReference>
<dbReference type="GO" id="GO:0005524">
    <property type="term" value="F:ATP binding"/>
    <property type="evidence" value="ECO:0007669"/>
    <property type="project" value="UniProtKB-KW"/>
</dbReference>
<dbReference type="GO" id="GO:0003883">
    <property type="term" value="F:CTP synthase activity"/>
    <property type="evidence" value="ECO:0007669"/>
    <property type="project" value="UniProtKB-UniRule"/>
</dbReference>
<dbReference type="GO" id="GO:0004359">
    <property type="term" value="F:glutaminase activity"/>
    <property type="evidence" value="ECO:0007669"/>
    <property type="project" value="RHEA"/>
</dbReference>
<dbReference type="GO" id="GO:0042802">
    <property type="term" value="F:identical protein binding"/>
    <property type="evidence" value="ECO:0007669"/>
    <property type="project" value="TreeGrafter"/>
</dbReference>
<dbReference type="GO" id="GO:0046872">
    <property type="term" value="F:metal ion binding"/>
    <property type="evidence" value="ECO:0007669"/>
    <property type="project" value="UniProtKB-KW"/>
</dbReference>
<dbReference type="GO" id="GO:0044210">
    <property type="term" value="P:'de novo' CTP biosynthetic process"/>
    <property type="evidence" value="ECO:0007669"/>
    <property type="project" value="UniProtKB-UniRule"/>
</dbReference>
<dbReference type="GO" id="GO:0019856">
    <property type="term" value="P:pyrimidine nucleobase biosynthetic process"/>
    <property type="evidence" value="ECO:0007669"/>
    <property type="project" value="TreeGrafter"/>
</dbReference>
<dbReference type="CDD" id="cd03113">
    <property type="entry name" value="CTPS_N"/>
    <property type="match status" value="1"/>
</dbReference>
<dbReference type="CDD" id="cd01746">
    <property type="entry name" value="GATase1_CTP_Synthase"/>
    <property type="match status" value="1"/>
</dbReference>
<dbReference type="FunFam" id="3.40.50.300:FF:000009">
    <property type="entry name" value="CTP synthase"/>
    <property type="match status" value="1"/>
</dbReference>
<dbReference type="FunFam" id="3.40.50.880:FF:000002">
    <property type="entry name" value="CTP synthase"/>
    <property type="match status" value="1"/>
</dbReference>
<dbReference type="Gene3D" id="3.40.50.880">
    <property type="match status" value="1"/>
</dbReference>
<dbReference type="Gene3D" id="3.40.50.300">
    <property type="entry name" value="P-loop containing nucleotide triphosphate hydrolases"/>
    <property type="match status" value="1"/>
</dbReference>
<dbReference type="HAMAP" id="MF_01227">
    <property type="entry name" value="PyrG"/>
    <property type="match status" value="1"/>
</dbReference>
<dbReference type="InterPro" id="IPR029062">
    <property type="entry name" value="Class_I_gatase-like"/>
</dbReference>
<dbReference type="InterPro" id="IPR004468">
    <property type="entry name" value="CTP_synthase"/>
</dbReference>
<dbReference type="InterPro" id="IPR017456">
    <property type="entry name" value="CTP_synthase_N"/>
</dbReference>
<dbReference type="InterPro" id="IPR017926">
    <property type="entry name" value="GATASE"/>
</dbReference>
<dbReference type="InterPro" id="IPR033828">
    <property type="entry name" value="GATase1_CTP_Synthase"/>
</dbReference>
<dbReference type="InterPro" id="IPR027417">
    <property type="entry name" value="P-loop_NTPase"/>
</dbReference>
<dbReference type="NCBIfam" id="NF003792">
    <property type="entry name" value="PRK05380.1"/>
    <property type="match status" value="1"/>
</dbReference>
<dbReference type="NCBIfam" id="TIGR00337">
    <property type="entry name" value="PyrG"/>
    <property type="match status" value="1"/>
</dbReference>
<dbReference type="PANTHER" id="PTHR11550">
    <property type="entry name" value="CTP SYNTHASE"/>
    <property type="match status" value="1"/>
</dbReference>
<dbReference type="PANTHER" id="PTHR11550:SF0">
    <property type="entry name" value="CTP SYNTHASE-RELATED"/>
    <property type="match status" value="1"/>
</dbReference>
<dbReference type="Pfam" id="PF06418">
    <property type="entry name" value="CTP_synth_N"/>
    <property type="match status" value="1"/>
</dbReference>
<dbReference type="Pfam" id="PF00117">
    <property type="entry name" value="GATase"/>
    <property type="match status" value="1"/>
</dbReference>
<dbReference type="SUPFAM" id="SSF52317">
    <property type="entry name" value="Class I glutamine amidotransferase-like"/>
    <property type="match status" value="1"/>
</dbReference>
<dbReference type="SUPFAM" id="SSF52540">
    <property type="entry name" value="P-loop containing nucleoside triphosphate hydrolases"/>
    <property type="match status" value="1"/>
</dbReference>
<dbReference type="PROSITE" id="PS51273">
    <property type="entry name" value="GATASE_TYPE_1"/>
    <property type="match status" value="1"/>
</dbReference>
<protein>
    <recommendedName>
        <fullName evidence="1">CTP synthase</fullName>
        <ecNumber evidence="1">6.3.4.2</ecNumber>
    </recommendedName>
    <alternativeName>
        <fullName evidence="1">Cytidine 5'-triphosphate synthase</fullName>
    </alternativeName>
    <alternativeName>
        <fullName evidence="1">Cytidine triphosphate synthetase</fullName>
        <shortName evidence="1">CTP synthetase</shortName>
        <shortName evidence="1">CTPS</shortName>
    </alternativeName>
    <alternativeName>
        <fullName evidence="1">UTP--ammonia ligase</fullName>
    </alternativeName>
</protein>
<sequence length="542" mass="60063">MARYVFITGGVVSSLGKGIAAAALAALLQARGYRVRIRKLDPYLNVDPGTMSPYQHGEVFVTDDGAETDLDLGHYERFTGRPANQQDNITTGRIYRNIIEKERRGDYLGATVQVIPHVTDEIKNFVLEGNEDYDFVLCEIGGTVGDIEAMPFLEAIRQLGNELPRGTAVYIHLTLMPYIPAAGELKTKPTQHSVKELRSIGIAPDILLVRADREIPESDRRKLSLFCNVRESAVIQALDVATIYDVPIAYHKEGLDSEVLSAFGIDPAPKPRMDRWEEVSHRLHNPEGEVTIAVVGKYTGLKDAYKSLIEALHHGGLANKVKVNLDWIEAEVFESEDPAPYLEKVHGILVPGGFGERGAEGKILAAKFARERKVPYFGICFGMQMACIEAARNLVGIEDASSSEFGPTREPVVGLMTEWLKGNMLEKRAAAGDLGGTMRLGAYEAVLKPDSKIAQIYGSTDIHERHRHRYEVNIDYKDRLEAAGLNFAGMSPDGVLPETVEYADHPWFIGVQYHPELKSRPFEPHPLFASFIEAAIEQSRLV</sequence>
<feature type="chain" id="PRO_0000266080" description="CTP synthase">
    <location>
        <begin position="1"/>
        <end position="542"/>
    </location>
</feature>
<feature type="domain" description="Glutamine amidotransferase type-1" evidence="1">
    <location>
        <begin position="291"/>
        <end position="541"/>
    </location>
</feature>
<feature type="region of interest" description="Amidoligase domain" evidence="1">
    <location>
        <begin position="1"/>
        <end position="265"/>
    </location>
</feature>
<feature type="active site" description="Nucleophile; for glutamine hydrolysis" evidence="1">
    <location>
        <position position="380"/>
    </location>
</feature>
<feature type="active site" evidence="1">
    <location>
        <position position="514"/>
    </location>
</feature>
<feature type="active site" evidence="1">
    <location>
        <position position="516"/>
    </location>
</feature>
<feature type="binding site" evidence="1">
    <location>
        <position position="13"/>
    </location>
    <ligand>
        <name>CTP</name>
        <dbReference type="ChEBI" id="CHEBI:37563"/>
        <note>allosteric inhibitor</note>
    </ligand>
</feature>
<feature type="binding site" evidence="1">
    <location>
        <position position="13"/>
    </location>
    <ligand>
        <name>UTP</name>
        <dbReference type="ChEBI" id="CHEBI:46398"/>
    </ligand>
</feature>
<feature type="binding site" evidence="1">
    <location>
        <begin position="14"/>
        <end position="19"/>
    </location>
    <ligand>
        <name>ATP</name>
        <dbReference type="ChEBI" id="CHEBI:30616"/>
    </ligand>
</feature>
<feature type="binding site" evidence="1">
    <location>
        <position position="54"/>
    </location>
    <ligand>
        <name>L-glutamine</name>
        <dbReference type="ChEBI" id="CHEBI:58359"/>
    </ligand>
</feature>
<feature type="binding site" evidence="1">
    <location>
        <position position="71"/>
    </location>
    <ligand>
        <name>ATP</name>
        <dbReference type="ChEBI" id="CHEBI:30616"/>
    </ligand>
</feature>
<feature type="binding site" evidence="1">
    <location>
        <position position="71"/>
    </location>
    <ligand>
        <name>Mg(2+)</name>
        <dbReference type="ChEBI" id="CHEBI:18420"/>
    </ligand>
</feature>
<feature type="binding site" evidence="1">
    <location>
        <position position="139"/>
    </location>
    <ligand>
        <name>Mg(2+)</name>
        <dbReference type="ChEBI" id="CHEBI:18420"/>
    </ligand>
</feature>
<feature type="binding site" evidence="1">
    <location>
        <begin position="146"/>
        <end position="148"/>
    </location>
    <ligand>
        <name>CTP</name>
        <dbReference type="ChEBI" id="CHEBI:37563"/>
        <note>allosteric inhibitor</note>
    </ligand>
</feature>
<feature type="binding site" evidence="1">
    <location>
        <begin position="186"/>
        <end position="191"/>
    </location>
    <ligand>
        <name>CTP</name>
        <dbReference type="ChEBI" id="CHEBI:37563"/>
        <note>allosteric inhibitor</note>
    </ligand>
</feature>
<feature type="binding site" evidence="1">
    <location>
        <begin position="186"/>
        <end position="191"/>
    </location>
    <ligand>
        <name>UTP</name>
        <dbReference type="ChEBI" id="CHEBI:46398"/>
    </ligand>
</feature>
<feature type="binding site" evidence="1">
    <location>
        <position position="222"/>
    </location>
    <ligand>
        <name>CTP</name>
        <dbReference type="ChEBI" id="CHEBI:37563"/>
        <note>allosteric inhibitor</note>
    </ligand>
</feature>
<feature type="binding site" evidence="1">
    <location>
        <position position="222"/>
    </location>
    <ligand>
        <name>UTP</name>
        <dbReference type="ChEBI" id="CHEBI:46398"/>
    </ligand>
</feature>
<feature type="binding site" evidence="1">
    <location>
        <position position="353"/>
    </location>
    <ligand>
        <name>L-glutamine</name>
        <dbReference type="ChEBI" id="CHEBI:58359"/>
    </ligand>
</feature>
<feature type="binding site" evidence="1">
    <location>
        <begin position="381"/>
        <end position="384"/>
    </location>
    <ligand>
        <name>L-glutamine</name>
        <dbReference type="ChEBI" id="CHEBI:58359"/>
    </ligand>
</feature>
<feature type="binding site" evidence="1">
    <location>
        <position position="404"/>
    </location>
    <ligand>
        <name>L-glutamine</name>
        <dbReference type="ChEBI" id="CHEBI:58359"/>
    </ligand>
</feature>
<feature type="binding site" evidence="1">
    <location>
        <position position="469"/>
    </location>
    <ligand>
        <name>L-glutamine</name>
        <dbReference type="ChEBI" id="CHEBI:58359"/>
    </ligand>
</feature>
<comment type="function">
    <text evidence="1">Catalyzes the ATP-dependent amination of UTP to CTP with either L-glutamine or ammonia as the source of nitrogen. Regulates intracellular CTP levels through interactions with the four ribonucleotide triphosphates.</text>
</comment>
<comment type="catalytic activity">
    <reaction evidence="1">
        <text>UTP + L-glutamine + ATP + H2O = CTP + L-glutamate + ADP + phosphate + 2 H(+)</text>
        <dbReference type="Rhea" id="RHEA:26426"/>
        <dbReference type="ChEBI" id="CHEBI:15377"/>
        <dbReference type="ChEBI" id="CHEBI:15378"/>
        <dbReference type="ChEBI" id="CHEBI:29985"/>
        <dbReference type="ChEBI" id="CHEBI:30616"/>
        <dbReference type="ChEBI" id="CHEBI:37563"/>
        <dbReference type="ChEBI" id="CHEBI:43474"/>
        <dbReference type="ChEBI" id="CHEBI:46398"/>
        <dbReference type="ChEBI" id="CHEBI:58359"/>
        <dbReference type="ChEBI" id="CHEBI:456216"/>
        <dbReference type="EC" id="6.3.4.2"/>
    </reaction>
</comment>
<comment type="catalytic activity">
    <reaction evidence="1">
        <text>L-glutamine + H2O = L-glutamate + NH4(+)</text>
        <dbReference type="Rhea" id="RHEA:15889"/>
        <dbReference type="ChEBI" id="CHEBI:15377"/>
        <dbReference type="ChEBI" id="CHEBI:28938"/>
        <dbReference type="ChEBI" id="CHEBI:29985"/>
        <dbReference type="ChEBI" id="CHEBI:58359"/>
    </reaction>
</comment>
<comment type="catalytic activity">
    <reaction evidence="1">
        <text>UTP + NH4(+) + ATP = CTP + ADP + phosphate + 2 H(+)</text>
        <dbReference type="Rhea" id="RHEA:16597"/>
        <dbReference type="ChEBI" id="CHEBI:15378"/>
        <dbReference type="ChEBI" id="CHEBI:28938"/>
        <dbReference type="ChEBI" id="CHEBI:30616"/>
        <dbReference type="ChEBI" id="CHEBI:37563"/>
        <dbReference type="ChEBI" id="CHEBI:43474"/>
        <dbReference type="ChEBI" id="CHEBI:46398"/>
        <dbReference type="ChEBI" id="CHEBI:456216"/>
    </reaction>
</comment>
<comment type="activity regulation">
    <text evidence="1">Allosterically activated by GTP, when glutamine is the substrate; GTP has no effect on the reaction when ammonia is the substrate. The allosteric effector GTP functions by stabilizing the protein conformation that binds the tetrahedral intermediate(s) formed during glutamine hydrolysis. Inhibited by the product CTP, via allosteric rather than competitive inhibition.</text>
</comment>
<comment type="pathway">
    <text evidence="1">Pyrimidine metabolism; CTP biosynthesis via de novo pathway; CTP from UDP: step 2/2.</text>
</comment>
<comment type="subunit">
    <text evidence="1">Homotetramer.</text>
</comment>
<comment type="miscellaneous">
    <text evidence="1">CTPSs have evolved a hybrid strategy for distinguishing between UTP and CTP. The overlapping regions of the product feedback inhibitory and substrate sites recognize a common feature in both compounds, the triphosphate moiety. To differentiate isosteric substrate and product pyrimidine rings, an additional pocket far from the expected kinase/ligase catalytic site, specifically recognizes the cytosine and ribose portions of the product inhibitor.</text>
</comment>
<comment type="similarity">
    <text evidence="1">Belongs to the CTP synthase family.</text>
</comment>
<organism>
    <name type="scientific">Brucella abortus (strain 2308)</name>
    <dbReference type="NCBI Taxonomy" id="359391"/>
    <lineage>
        <taxon>Bacteria</taxon>
        <taxon>Pseudomonadati</taxon>
        <taxon>Pseudomonadota</taxon>
        <taxon>Alphaproteobacteria</taxon>
        <taxon>Hyphomicrobiales</taxon>
        <taxon>Brucellaceae</taxon>
        <taxon>Brucella/Ochrobactrum group</taxon>
        <taxon>Brucella</taxon>
    </lineage>
</organism>
<accession>Q2YPU8</accession>